<sequence length="185" mass="20784">MISAGDLRKGTTFELDGQVYTVIDFLHVKPGKGAAFVRTKLRNVISGGVTETTFNPTAKLQEAVIERKEMQYLYSDGELYYFMDQETFEQIPLNFEQVENAIKFLKENMFAIIKFYKGAAFSVEAPNFVELQIVECEPGIKGNTATNAMKPAKLETGAVVNVPLFVNEGETIRVDTRTGDYMERV</sequence>
<feature type="chain" id="PRO_1000010721" description="Elongation factor P">
    <location>
        <begin position="1"/>
        <end position="185"/>
    </location>
</feature>
<name>EFP_CLONN</name>
<evidence type="ECO:0000255" key="1">
    <source>
        <dbReference type="HAMAP-Rule" id="MF_00141"/>
    </source>
</evidence>
<comment type="function">
    <text evidence="1">Involved in peptide bond synthesis. Stimulates efficient translation and peptide-bond synthesis on native or reconstituted 70S ribosomes in vitro. Probably functions indirectly by altering the affinity of the ribosome for aminoacyl-tRNA, thus increasing their reactivity as acceptors for peptidyl transferase.</text>
</comment>
<comment type="pathway">
    <text evidence="1">Protein biosynthesis; polypeptide chain elongation.</text>
</comment>
<comment type="subcellular location">
    <subcellularLocation>
        <location evidence="1">Cytoplasm</location>
    </subcellularLocation>
</comment>
<comment type="similarity">
    <text evidence="1">Belongs to the elongation factor P family.</text>
</comment>
<dbReference type="EMBL" id="CP000382">
    <property type="protein sequence ID" value="ABK60845.1"/>
    <property type="molecule type" value="Genomic_DNA"/>
</dbReference>
<dbReference type="RefSeq" id="WP_011722043.1">
    <property type="nucleotide sequence ID" value="NC_008593.1"/>
</dbReference>
<dbReference type="SMR" id="A0Q087"/>
<dbReference type="STRING" id="386415.NT01CX_1966"/>
<dbReference type="KEGG" id="cno:NT01CX_1966"/>
<dbReference type="eggNOG" id="COG0231">
    <property type="taxonomic scope" value="Bacteria"/>
</dbReference>
<dbReference type="HOGENOM" id="CLU_074944_0_1_9"/>
<dbReference type="UniPathway" id="UPA00345"/>
<dbReference type="Proteomes" id="UP000008220">
    <property type="component" value="Chromosome"/>
</dbReference>
<dbReference type="GO" id="GO:0005737">
    <property type="term" value="C:cytoplasm"/>
    <property type="evidence" value="ECO:0007669"/>
    <property type="project" value="UniProtKB-SubCell"/>
</dbReference>
<dbReference type="GO" id="GO:0003746">
    <property type="term" value="F:translation elongation factor activity"/>
    <property type="evidence" value="ECO:0007669"/>
    <property type="project" value="UniProtKB-UniRule"/>
</dbReference>
<dbReference type="GO" id="GO:0043043">
    <property type="term" value="P:peptide biosynthetic process"/>
    <property type="evidence" value="ECO:0007669"/>
    <property type="project" value="InterPro"/>
</dbReference>
<dbReference type="CDD" id="cd04470">
    <property type="entry name" value="S1_EF-P_repeat_1"/>
    <property type="match status" value="1"/>
</dbReference>
<dbReference type="CDD" id="cd05794">
    <property type="entry name" value="S1_EF-P_repeat_2"/>
    <property type="match status" value="1"/>
</dbReference>
<dbReference type="FunFam" id="2.30.30.30:FF:000003">
    <property type="entry name" value="Elongation factor P"/>
    <property type="match status" value="1"/>
</dbReference>
<dbReference type="FunFam" id="2.40.50.140:FF:000004">
    <property type="entry name" value="Elongation factor P"/>
    <property type="match status" value="1"/>
</dbReference>
<dbReference type="FunFam" id="2.40.50.140:FF:000009">
    <property type="entry name" value="Elongation factor P"/>
    <property type="match status" value="1"/>
</dbReference>
<dbReference type="Gene3D" id="2.30.30.30">
    <property type="match status" value="1"/>
</dbReference>
<dbReference type="Gene3D" id="2.40.50.140">
    <property type="entry name" value="Nucleic acid-binding proteins"/>
    <property type="match status" value="2"/>
</dbReference>
<dbReference type="HAMAP" id="MF_00141">
    <property type="entry name" value="EF_P"/>
    <property type="match status" value="1"/>
</dbReference>
<dbReference type="InterPro" id="IPR015365">
    <property type="entry name" value="Elong-fact-P_C"/>
</dbReference>
<dbReference type="InterPro" id="IPR012340">
    <property type="entry name" value="NA-bd_OB-fold"/>
</dbReference>
<dbReference type="InterPro" id="IPR014722">
    <property type="entry name" value="Rib_uL2_dom2"/>
</dbReference>
<dbReference type="InterPro" id="IPR020599">
    <property type="entry name" value="Transl_elong_fac_P/YeiP"/>
</dbReference>
<dbReference type="InterPro" id="IPR013185">
    <property type="entry name" value="Transl_elong_KOW-like"/>
</dbReference>
<dbReference type="InterPro" id="IPR001059">
    <property type="entry name" value="Transl_elong_P/YeiP_cen"/>
</dbReference>
<dbReference type="InterPro" id="IPR013852">
    <property type="entry name" value="Transl_elong_P/YeiP_CS"/>
</dbReference>
<dbReference type="InterPro" id="IPR011768">
    <property type="entry name" value="Transl_elongation_fac_P"/>
</dbReference>
<dbReference type="InterPro" id="IPR008991">
    <property type="entry name" value="Translation_prot_SH3-like_sf"/>
</dbReference>
<dbReference type="NCBIfam" id="TIGR00038">
    <property type="entry name" value="efp"/>
    <property type="match status" value="1"/>
</dbReference>
<dbReference type="NCBIfam" id="NF001810">
    <property type="entry name" value="PRK00529.1"/>
    <property type="match status" value="1"/>
</dbReference>
<dbReference type="PANTHER" id="PTHR30053">
    <property type="entry name" value="ELONGATION FACTOR P"/>
    <property type="match status" value="1"/>
</dbReference>
<dbReference type="PANTHER" id="PTHR30053:SF12">
    <property type="entry name" value="ELONGATION FACTOR P (EF-P) FAMILY PROTEIN"/>
    <property type="match status" value="1"/>
</dbReference>
<dbReference type="Pfam" id="PF01132">
    <property type="entry name" value="EFP"/>
    <property type="match status" value="1"/>
</dbReference>
<dbReference type="Pfam" id="PF08207">
    <property type="entry name" value="EFP_N"/>
    <property type="match status" value="1"/>
</dbReference>
<dbReference type="Pfam" id="PF09285">
    <property type="entry name" value="Elong-fact-P_C"/>
    <property type="match status" value="1"/>
</dbReference>
<dbReference type="PIRSF" id="PIRSF005901">
    <property type="entry name" value="EF-P"/>
    <property type="match status" value="1"/>
</dbReference>
<dbReference type="SMART" id="SM01185">
    <property type="entry name" value="EFP"/>
    <property type="match status" value="1"/>
</dbReference>
<dbReference type="SMART" id="SM00841">
    <property type="entry name" value="Elong-fact-P_C"/>
    <property type="match status" value="1"/>
</dbReference>
<dbReference type="SUPFAM" id="SSF50249">
    <property type="entry name" value="Nucleic acid-binding proteins"/>
    <property type="match status" value="2"/>
</dbReference>
<dbReference type="SUPFAM" id="SSF50104">
    <property type="entry name" value="Translation proteins SH3-like domain"/>
    <property type="match status" value="1"/>
</dbReference>
<dbReference type="PROSITE" id="PS01275">
    <property type="entry name" value="EFP"/>
    <property type="match status" value="1"/>
</dbReference>
<reference key="1">
    <citation type="journal article" date="2006" name="Nat. Biotechnol.">
        <title>The genome and transcriptomes of the anti-tumor agent Clostridium novyi-NT.</title>
        <authorList>
            <person name="Bettegowda C."/>
            <person name="Huang X."/>
            <person name="Lin J."/>
            <person name="Cheong I."/>
            <person name="Kohli M."/>
            <person name="Szabo S.A."/>
            <person name="Zhang X."/>
            <person name="Diaz L.A. Jr."/>
            <person name="Velculescu V.E."/>
            <person name="Parmigiani G."/>
            <person name="Kinzler K.W."/>
            <person name="Vogelstein B."/>
            <person name="Zhou S."/>
        </authorList>
    </citation>
    <scope>NUCLEOTIDE SEQUENCE [LARGE SCALE GENOMIC DNA]</scope>
    <source>
        <strain>NT</strain>
    </source>
</reference>
<proteinExistence type="inferred from homology"/>
<keyword id="KW-0963">Cytoplasm</keyword>
<keyword id="KW-0251">Elongation factor</keyword>
<keyword id="KW-0648">Protein biosynthesis</keyword>
<keyword id="KW-1185">Reference proteome</keyword>
<gene>
    <name evidence="1" type="primary">efp</name>
    <name type="ordered locus">NT01CX_1966</name>
</gene>
<organism>
    <name type="scientific">Clostridium novyi (strain NT)</name>
    <dbReference type="NCBI Taxonomy" id="386415"/>
    <lineage>
        <taxon>Bacteria</taxon>
        <taxon>Bacillati</taxon>
        <taxon>Bacillota</taxon>
        <taxon>Clostridia</taxon>
        <taxon>Eubacteriales</taxon>
        <taxon>Clostridiaceae</taxon>
        <taxon>Clostridium</taxon>
    </lineage>
</organism>
<protein>
    <recommendedName>
        <fullName evidence="1">Elongation factor P</fullName>
        <shortName evidence="1">EF-P</shortName>
    </recommendedName>
</protein>
<accession>A0Q087</accession>